<organism>
    <name type="scientific">Schizosaccharomyces pombe (strain 972 / ATCC 24843)</name>
    <name type="common">Fission yeast</name>
    <dbReference type="NCBI Taxonomy" id="284812"/>
    <lineage>
        <taxon>Eukaryota</taxon>
        <taxon>Fungi</taxon>
        <taxon>Dikarya</taxon>
        <taxon>Ascomycota</taxon>
        <taxon>Taphrinomycotina</taxon>
        <taxon>Schizosaccharomycetes</taxon>
        <taxon>Schizosaccharomycetales</taxon>
        <taxon>Schizosaccharomycetaceae</taxon>
        <taxon>Schizosaccharomyces</taxon>
    </lineage>
</organism>
<evidence type="ECO:0000250" key="1"/>
<evidence type="ECO:0000305" key="2"/>
<keyword id="KW-0143">Chaperone</keyword>
<keyword id="KW-1015">Disulfide bond</keyword>
<keyword id="KW-0472">Membrane</keyword>
<keyword id="KW-0479">Metal-binding</keyword>
<keyword id="KW-0496">Mitochondrion</keyword>
<keyword id="KW-0999">Mitochondrion inner membrane</keyword>
<keyword id="KW-0653">Protein transport</keyword>
<keyword id="KW-1185">Reference proteome</keyword>
<keyword id="KW-0811">Translocation</keyword>
<keyword id="KW-0813">Transport</keyword>
<keyword id="KW-0862">Zinc</keyword>
<gene>
    <name type="primary">tim13</name>
    <name type="ORF">SPAC17C9.09c</name>
</gene>
<name>TIM13_SCHPO</name>
<feature type="chain" id="PRO_0000193631" description="Mitochondrial import inner membrane translocase subunit tim13">
    <location>
        <begin position="1"/>
        <end position="95"/>
    </location>
</feature>
<feature type="short sequence motif" description="Twin CX3C motif">
    <location>
        <begin position="45"/>
        <end position="68"/>
    </location>
</feature>
<feature type="disulfide bond" evidence="1">
    <location>
        <begin position="45"/>
        <end position="68"/>
    </location>
</feature>
<feature type="disulfide bond" evidence="1">
    <location>
        <begin position="49"/>
        <end position="64"/>
    </location>
</feature>
<proteinExistence type="inferred from homology"/>
<accession>Q10481</accession>
<sequence>MGIFGGNSGNAPSSEDKKSIFMKQIRQELAVAQAGELISKINENCFDKCIPEPGSTFDPNEKSCVSKCMERYMDAWNIVSRTYISRMQREQKNLN</sequence>
<protein>
    <recommendedName>
        <fullName>Mitochondrial import inner membrane translocase subunit tim13</fullName>
    </recommendedName>
</protein>
<dbReference type="EMBL" id="AF143538">
    <property type="protein sequence ID" value="AAD40477.1"/>
    <property type="molecule type" value="mRNA"/>
</dbReference>
<dbReference type="EMBL" id="CU329670">
    <property type="protein sequence ID" value="CAA97355.1"/>
    <property type="molecule type" value="Genomic_DNA"/>
</dbReference>
<dbReference type="PIR" id="T11589">
    <property type="entry name" value="T11589"/>
</dbReference>
<dbReference type="RefSeq" id="NP_594597.1">
    <property type="nucleotide sequence ID" value="NM_001020025.2"/>
</dbReference>
<dbReference type="SMR" id="Q10481"/>
<dbReference type="BioGRID" id="278621">
    <property type="interactions" value="35"/>
</dbReference>
<dbReference type="FunCoup" id="Q10481">
    <property type="interactions" value="344"/>
</dbReference>
<dbReference type="IntAct" id="Q10481">
    <property type="interactions" value="2"/>
</dbReference>
<dbReference type="STRING" id="284812.Q10481"/>
<dbReference type="PaxDb" id="4896-SPAC17C9.09c.1"/>
<dbReference type="EnsemblFungi" id="SPAC17C9.09c.1">
    <property type="protein sequence ID" value="SPAC17C9.09c.1:pep"/>
    <property type="gene ID" value="SPAC17C9.09c"/>
</dbReference>
<dbReference type="GeneID" id="2542145"/>
<dbReference type="KEGG" id="spo:2542145"/>
<dbReference type="PomBase" id="SPAC17C9.09c">
    <property type="gene designation" value="tim13"/>
</dbReference>
<dbReference type="VEuPathDB" id="FungiDB:SPAC17C9.09c"/>
<dbReference type="eggNOG" id="KOG1733">
    <property type="taxonomic scope" value="Eukaryota"/>
</dbReference>
<dbReference type="HOGENOM" id="CLU_141397_0_2_1"/>
<dbReference type="InParanoid" id="Q10481"/>
<dbReference type="OMA" id="MAAWNQV"/>
<dbReference type="PhylomeDB" id="Q10481"/>
<dbReference type="PRO" id="PR:Q10481"/>
<dbReference type="Proteomes" id="UP000002485">
    <property type="component" value="Chromosome I"/>
</dbReference>
<dbReference type="GO" id="GO:0005829">
    <property type="term" value="C:cytosol"/>
    <property type="evidence" value="ECO:0007005"/>
    <property type="project" value="PomBase"/>
</dbReference>
<dbReference type="GO" id="GO:0005743">
    <property type="term" value="C:mitochondrial inner membrane"/>
    <property type="evidence" value="ECO:0007669"/>
    <property type="project" value="UniProtKB-SubCell"/>
</dbReference>
<dbReference type="GO" id="GO:0042719">
    <property type="term" value="C:mitochondrial intermembrane space protein transporter complex"/>
    <property type="evidence" value="ECO:0000318"/>
    <property type="project" value="GO_Central"/>
</dbReference>
<dbReference type="GO" id="GO:0005634">
    <property type="term" value="C:nucleus"/>
    <property type="evidence" value="ECO:0007005"/>
    <property type="project" value="PomBase"/>
</dbReference>
<dbReference type="GO" id="GO:0046872">
    <property type="term" value="F:metal ion binding"/>
    <property type="evidence" value="ECO:0007669"/>
    <property type="project" value="UniProtKB-KW"/>
</dbReference>
<dbReference type="GO" id="GO:0045039">
    <property type="term" value="P:protein insertion into mitochondrial inner membrane"/>
    <property type="evidence" value="ECO:0000318"/>
    <property type="project" value="GO_Central"/>
</dbReference>
<dbReference type="FunFam" id="1.10.287.810:FF:000001">
    <property type="entry name" value="mitochondrial import inner membrane translocase subunit TIM13"/>
    <property type="match status" value="1"/>
</dbReference>
<dbReference type="Gene3D" id="1.10.287.810">
    <property type="entry name" value="Mitochondrial import inner membrane translocase subunit tim13 like domains"/>
    <property type="match status" value="1"/>
</dbReference>
<dbReference type="InterPro" id="IPR004217">
    <property type="entry name" value="Tim10-like"/>
</dbReference>
<dbReference type="InterPro" id="IPR035427">
    <property type="entry name" value="Tim10-like_dom_sf"/>
</dbReference>
<dbReference type="Pfam" id="PF02953">
    <property type="entry name" value="zf-Tim10_DDP"/>
    <property type="match status" value="1"/>
</dbReference>
<dbReference type="SUPFAM" id="SSF144122">
    <property type="entry name" value="Tim10-like"/>
    <property type="match status" value="1"/>
</dbReference>
<comment type="function">
    <text evidence="1">Mitochondrial intermembrane chaperone that participates in the import and insertion of some multi-pass transmembrane proteins into the mitochondrial inner membrane. Also required for the transfer of beta-barrel precursors from the TOM complex to the sorting and assembly machinery (SAM complex) of the outer membrane. Acts as a chaperone-like protein that protects the hydrophobic precursors from aggregation and guide them through the mitochondrial intermembrane space. The TIM8-TIM13 complex is non essential and only mediates the import of few proteins, while the predominant TIM9-TIM10 70 kDa complex is crucial and mediates the import of much more proteins (By similarity).</text>
</comment>
<comment type="subunit">
    <text evidence="1">Heterohexamer; composed of 3 copies of TIM8 and 3 copies of TIM13, named soluble 70 kDa complex. Associates with the TIM22 complex, whose core is composed of TIM22 and TIM54. Interacts with the transmembrane regions of multi-pass transmembrane proteins in transit (By similarity).</text>
</comment>
<comment type="subcellular location">
    <subcellularLocation>
        <location evidence="1">Mitochondrion inner membrane</location>
        <topology evidence="1">Peripheral membrane protein</topology>
        <orientation evidence="1">Intermembrane side</orientation>
    </subcellularLocation>
</comment>
<comment type="domain">
    <text evidence="1">The twin CX3C motif contains 4 conserved Cys residues that form 2 disulfide bonds in the mitochondrial intermembrane space. However, during the transit of TIM13 from cytoplasm into mitochondrion, the Cys residues probably coordinate zinc, thereby preventing folding and allowing its transfer across mitochondrial outer membrane (By similarity).</text>
</comment>
<comment type="similarity">
    <text evidence="2">Belongs to the small Tim family.</text>
</comment>
<reference key="1">
    <citation type="journal article" date="1999" name="FEBS Lett.">
        <title>The mitochondrial TIM22 preprotein translocase is highly conserved throughout the eukaryotic kingdom.</title>
        <authorList>
            <person name="Bauer M.F."/>
            <person name="Rothbauer U."/>
            <person name="Muehlenbein N."/>
            <person name="Smith R.J.H."/>
            <person name="Gerbitz K.-D."/>
            <person name="Neupert W."/>
            <person name="Brunner M."/>
            <person name="Hofmann S."/>
        </authorList>
    </citation>
    <scope>NUCLEOTIDE SEQUENCE [MRNA]</scope>
</reference>
<reference key="2">
    <citation type="journal article" date="2002" name="Nature">
        <title>The genome sequence of Schizosaccharomyces pombe.</title>
        <authorList>
            <person name="Wood V."/>
            <person name="Gwilliam R."/>
            <person name="Rajandream M.A."/>
            <person name="Lyne M.H."/>
            <person name="Lyne R."/>
            <person name="Stewart A."/>
            <person name="Sgouros J.G."/>
            <person name="Peat N."/>
            <person name="Hayles J."/>
            <person name="Baker S.G."/>
            <person name="Basham D."/>
            <person name="Bowman S."/>
            <person name="Brooks K."/>
            <person name="Brown D."/>
            <person name="Brown S."/>
            <person name="Chillingworth T."/>
            <person name="Churcher C.M."/>
            <person name="Collins M."/>
            <person name="Connor R."/>
            <person name="Cronin A."/>
            <person name="Davis P."/>
            <person name="Feltwell T."/>
            <person name="Fraser A."/>
            <person name="Gentles S."/>
            <person name="Goble A."/>
            <person name="Hamlin N."/>
            <person name="Harris D.E."/>
            <person name="Hidalgo J."/>
            <person name="Hodgson G."/>
            <person name="Holroyd S."/>
            <person name="Hornsby T."/>
            <person name="Howarth S."/>
            <person name="Huckle E.J."/>
            <person name="Hunt S."/>
            <person name="Jagels K."/>
            <person name="James K.D."/>
            <person name="Jones L."/>
            <person name="Jones M."/>
            <person name="Leather S."/>
            <person name="McDonald S."/>
            <person name="McLean J."/>
            <person name="Mooney P."/>
            <person name="Moule S."/>
            <person name="Mungall K.L."/>
            <person name="Murphy L.D."/>
            <person name="Niblett D."/>
            <person name="Odell C."/>
            <person name="Oliver K."/>
            <person name="O'Neil S."/>
            <person name="Pearson D."/>
            <person name="Quail M.A."/>
            <person name="Rabbinowitsch E."/>
            <person name="Rutherford K.M."/>
            <person name="Rutter S."/>
            <person name="Saunders D."/>
            <person name="Seeger K."/>
            <person name="Sharp S."/>
            <person name="Skelton J."/>
            <person name="Simmonds M.N."/>
            <person name="Squares R."/>
            <person name="Squares S."/>
            <person name="Stevens K."/>
            <person name="Taylor K."/>
            <person name="Taylor R.G."/>
            <person name="Tivey A."/>
            <person name="Walsh S.V."/>
            <person name="Warren T."/>
            <person name="Whitehead S."/>
            <person name="Woodward J.R."/>
            <person name="Volckaert G."/>
            <person name="Aert R."/>
            <person name="Robben J."/>
            <person name="Grymonprez B."/>
            <person name="Weltjens I."/>
            <person name="Vanstreels E."/>
            <person name="Rieger M."/>
            <person name="Schaefer M."/>
            <person name="Mueller-Auer S."/>
            <person name="Gabel C."/>
            <person name="Fuchs M."/>
            <person name="Duesterhoeft A."/>
            <person name="Fritzc C."/>
            <person name="Holzer E."/>
            <person name="Moestl D."/>
            <person name="Hilbert H."/>
            <person name="Borzym K."/>
            <person name="Langer I."/>
            <person name="Beck A."/>
            <person name="Lehrach H."/>
            <person name="Reinhardt R."/>
            <person name="Pohl T.M."/>
            <person name="Eger P."/>
            <person name="Zimmermann W."/>
            <person name="Wedler H."/>
            <person name="Wambutt R."/>
            <person name="Purnelle B."/>
            <person name="Goffeau A."/>
            <person name="Cadieu E."/>
            <person name="Dreano S."/>
            <person name="Gloux S."/>
            <person name="Lelaure V."/>
            <person name="Mottier S."/>
            <person name="Galibert F."/>
            <person name="Aves S.J."/>
            <person name="Xiang Z."/>
            <person name="Hunt C."/>
            <person name="Moore K."/>
            <person name="Hurst S.M."/>
            <person name="Lucas M."/>
            <person name="Rochet M."/>
            <person name="Gaillardin C."/>
            <person name="Tallada V.A."/>
            <person name="Garzon A."/>
            <person name="Thode G."/>
            <person name="Daga R.R."/>
            <person name="Cruzado L."/>
            <person name="Jimenez J."/>
            <person name="Sanchez M."/>
            <person name="del Rey F."/>
            <person name="Benito J."/>
            <person name="Dominguez A."/>
            <person name="Revuelta J.L."/>
            <person name="Moreno S."/>
            <person name="Armstrong J."/>
            <person name="Forsburg S.L."/>
            <person name="Cerutti L."/>
            <person name="Lowe T."/>
            <person name="McCombie W.R."/>
            <person name="Paulsen I."/>
            <person name="Potashkin J."/>
            <person name="Shpakovski G.V."/>
            <person name="Ussery D."/>
            <person name="Barrell B.G."/>
            <person name="Nurse P."/>
        </authorList>
    </citation>
    <scope>NUCLEOTIDE SEQUENCE [LARGE SCALE GENOMIC DNA]</scope>
    <source>
        <strain>972 / ATCC 24843</strain>
    </source>
</reference>